<name>HRCA_NITWN</name>
<keyword id="KW-1185">Reference proteome</keyword>
<keyword id="KW-0678">Repressor</keyword>
<keyword id="KW-0346">Stress response</keyword>
<keyword id="KW-0804">Transcription</keyword>
<keyword id="KW-0805">Transcription regulation</keyword>
<proteinExistence type="inferred from homology"/>
<reference key="1">
    <citation type="journal article" date="2006" name="Appl. Environ. Microbiol.">
        <title>Genome sequence of the chemolithoautotrophic nitrite-oxidizing bacterium Nitrobacter winogradskyi Nb-255.</title>
        <authorList>
            <person name="Starkenburg S.R."/>
            <person name="Chain P.S.G."/>
            <person name="Sayavedra-Soto L.A."/>
            <person name="Hauser L."/>
            <person name="Land M.L."/>
            <person name="Larimer F.W."/>
            <person name="Malfatti S.A."/>
            <person name="Klotz M.G."/>
            <person name="Bottomley P.J."/>
            <person name="Arp D.J."/>
            <person name="Hickey W.J."/>
        </authorList>
    </citation>
    <scope>NUCLEOTIDE SEQUENCE [LARGE SCALE GENOMIC DNA]</scope>
    <source>
        <strain>ATCC 25391 / DSM 10237 / CIP 104748 / NCIMB 11846 / Nb-255</strain>
    </source>
</reference>
<organism>
    <name type="scientific">Nitrobacter winogradskyi (strain ATCC 25391 / DSM 10237 / CIP 104748 / NCIMB 11846 / Nb-255)</name>
    <dbReference type="NCBI Taxonomy" id="323098"/>
    <lineage>
        <taxon>Bacteria</taxon>
        <taxon>Pseudomonadati</taxon>
        <taxon>Pseudomonadota</taxon>
        <taxon>Alphaproteobacteria</taxon>
        <taxon>Hyphomicrobiales</taxon>
        <taxon>Nitrobacteraceae</taxon>
        <taxon>Nitrobacter</taxon>
    </lineage>
</organism>
<protein>
    <recommendedName>
        <fullName evidence="1">Heat-inducible transcription repressor HrcA</fullName>
    </recommendedName>
</protein>
<comment type="function">
    <text evidence="1">Negative regulator of class I heat shock genes (grpE-dnaK-dnaJ and groELS operons). Prevents heat-shock induction of these operons.</text>
</comment>
<comment type="similarity">
    <text evidence="1">Belongs to the HrcA family.</text>
</comment>
<evidence type="ECO:0000255" key="1">
    <source>
        <dbReference type="HAMAP-Rule" id="MF_00081"/>
    </source>
</evidence>
<dbReference type="EMBL" id="CP000115">
    <property type="protein sequence ID" value="ABA03462.1"/>
    <property type="molecule type" value="Genomic_DNA"/>
</dbReference>
<dbReference type="RefSeq" id="WP_011313530.1">
    <property type="nucleotide sequence ID" value="NC_007406.1"/>
</dbReference>
<dbReference type="SMR" id="Q3SW79"/>
<dbReference type="STRING" id="323098.Nwi_0194"/>
<dbReference type="KEGG" id="nwi:Nwi_0194"/>
<dbReference type="eggNOG" id="COG1420">
    <property type="taxonomic scope" value="Bacteria"/>
</dbReference>
<dbReference type="HOGENOM" id="CLU_050019_0_0_5"/>
<dbReference type="OrthoDB" id="9783139at2"/>
<dbReference type="Proteomes" id="UP000002531">
    <property type="component" value="Chromosome"/>
</dbReference>
<dbReference type="GO" id="GO:0003677">
    <property type="term" value="F:DNA binding"/>
    <property type="evidence" value="ECO:0007669"/>
    <property type="project" value="InterPro"/>
</dbReference>
<dbReference type="GO" id="GO:0045892">
    <property type="term" value="P:negative regulation of DNA-templated transcription"/>
    <property type="evidence" value="ECO:0007669"/>
    <property type="project" value="UniProtKB-UniRule"/>
</dbReference>
<dbReference type="Gene3D" id="3.30.450.40">
    <property type="match status" value="1"/>
</dbReference>
<dbReference type="Gene3D" id="3.30.390.60">
    <property type="entry name" value="Heat-inducible transcription repressor hrca homolog, domain 3"/>
    <property type="match status" value="1"/>
</dbReference>
<dbReference type="Gene3D" id="1.10.10.10">
    <property type="entry name" value="Winged helix-like DNA-binding domain superfamily/Winged helix DNA-binding domain"/>
    <property type="match status" value="1"/>
</dbReference>
<dbReference type="HAMAP" id="MF_00081">
    <property type="entry name" value="HrcA"/>
    <property type="match status" value="1"/>
</dbReference>
<dbReference type="InterPro" id="IPR029016">
    <property type="entry name" value="GAF-like_dom_sf"/>
</dbReference>
<dbReference type="InterPro" id="IPR002571">
    <property type="entry name" value="HrcA"/>
</dbReference>
<dbReference type="InterPro" id="IPR021153">
    <property type="entry name" value="HrcA_C"/>
</dbReference>
<dbReference type="InterPro" id="IPR036388">
    <property type="entry name" value="WH-like_DNA-bd_sf"/>
</dbReference>
<dbReference type="InterPro" id="IPR036390">
    <property type="entry name" value="WH_DNA-bd_sf"/>
</dbReference>
<dbReference type="InterPro" id="IPR023120">
    <property type="entry name" value="WHTH_transcript_rep_HrcA_IDD"/>
</dbReference>
<dbReference type="NCBIfam" id="TIGR00331">
    <property type="entry name" value="hrcA"/>
    <property type="match status" value="1"/>
</dbReference>
<dbReference type="PANTHER" id="PTHR34824">
    <property type="entry name" value="HEAT-INDUCIBLE TRANSCRIPTION REPRESSOR HRCA"/>
    <property type="match status" value="1"/>
</dbReference>
<dbReference type="PANTHER" id="PTHR34824:SF1">
    <property type="entry name" value="HEAT-INDUCIBLE TRANSCRIPTION REPRESSOR HRCA"/>
    <property type="match status" value="1"/>
</dbReference>
<dbReference type="Pfam" id="PF01628">
    <property type="entry name" value="HrcA"/>
    <property type="match status" value="1"/>
</dbReference>
<dbReference type="PIRSF" id="PIRSF005485">
    <property type="entry name" value="HrcA"/>
    <property type="match status" value="1"/>
</dbReference>
<dbReference type="SUPFAM" id="SSF55781">
    <property type="entry name" value="GAF domain-like"/>
    <property type="match status" value="1"/>
</dbReference>
<dbReference type="SUPFAM" id="SSF46785">
    <property type="entry name" value="Winged helix' DNA-binding domain"/>
    <property type="match status" value="1"/>
</dbReference>
<gene>
    <name evidence="1" type="primary">hrcA</name>
    <name type="ordered locus">Nwi_0194</name>
</gene>
<feature type="chain" id="PRO_1000010437" description="Heat-inducible transcription repressor HrcA">
    <location>
        <begin position="1"/>
        <end position="362"/>
    </location>
</feature>
<sequence>MAHHDPIGLIAPNAGLAQLNERSRDIFRQIVESYLATGEPVGSRNISRLIAVPLSPASVRNVMSDLEQLGLIYAPHTSAGRLPTELGLRFFVDALMQVGDLTEPERQSIQSQLASVGKAQSVEAALEEALTRLSGLTRTAAVVLTAKSNVRLKHIEFVRLEPDKALVVLVAEDGQVENRVLTLPSGVPASALTEASNFLNARIRGRTLAEARLELETALAQSKAELDQLTQKIVAAGIASWSGGDSDDRQLIVRGHANLLEDLHAMEDLERVRLLFDDLETKREVIDLLGRAERADGVRIFIGSENKLFSLSGSSTIIAPYSDGAGHIVGVLGVIGPTRLNYARVIPMVDYAARIVSQMLGR</sequence>
<accession>Q3SW79</accession>